<proteinExistence type="inferred from homology"/>
<keyword id="KW-0067">ATP-binding</keyword>
<keyword id="KW-0068">Autocatalytic cleavage</keyword>
<keyword id="KW-0963">Cytoplasm</keyword>
<keyword id="KW-0238">DNA-binding</keyword>
<keyword id="KW-0413">Isomerase</keyword>
<keyword id="KW-0460">Magnesium</keyword>
<keyword id="KW-0479">Metal-binding</keyword>
<keyword id="KW-0547">Nucleotide-binding</keyword>
<keyword id="KW-0651">Protein splicing</keyword>
<keyword id="KW-1185">Reference proteome</keyword>
<keyword id="KW-0677">Repeat</keyword>
<keyword id="KW-0799">Topoisomerase</keyword>
<keyword id="KW-0862">Zinc</keyword>
<keyword id="KW-0863">Zinc-finger</keyword>
<comment type="function">
    <text evidence="2 9">Modifies the topological state of DNA by introducing positive supercoils in an ATP-dependent process, increasing the linking number in steps of +1. Binds to single-stranded DNA, transiently cleaves and then rejoins the ends, introducing a positive supercoil in the process. The scissile phosphodiester is attacked by the catalytic tyrosine of the enzyme, resulting in the formation of a DNA-(5'-phosphotyrosyl)-enzyme intermediate. Probably involved in rewinding DNA strands in regions of the chromosome that have opened up to allow replication, transcription, DNA repair and/or for DNA protection.</text>
</comment>
<comment type="catalytic activity">
    <reaction evidence="2">
        <text>ATP + H2O = ADP + phosphate + H(+)</text>
        <dbReference type="Rhea" id="RHEA:13065"/>
        <dbReference type="ChEBI" id="CHEBI:15377"/>
        <dbReference type="ChEBI" id="CHEBI:15378"/>
        <dbReference type="ChEBI" id="CHEBI:30616"/>
        <dbReference type="ChEBI" id="CHEBI:43474"/>
        <dbReference type="ChEBI" id="CHEBI:456216"/>
    </reaction>
</comment>
<comment type="cofactor">
    <cofactor evidence="2">
        <name>Zn(2+)</name>
        <dbReference type="ChEBI" id="CHEBI:29105"/>
    </cofactor>
    <text evidence="2">Binds 2 zinc ions per subunit.</text>
</comment>
<comment type="cofactor">
    <cofactor evidence="2">
        <name>Mg(2+)</name>
        <dbReference type="ChEBI" id="CHEBI:18420"/>
    </cofactor>
</comment>
<comment type="subunit">
    <text evidence="2">Monomer.</text>
</comment>
<comment type="subcellular location">
    <subcellularLocation>
        <location evidence="2">Cytoplasm</location>
    </subcellularLocation>
</comment>
<comment type="domain">
    <text evidence="2">Introduction of positive supercoils requires the cooperation of both domains. The helicase-like domain probably does not directly unwind DNA, but more likely acts by driving ATP-dependent conformational changes within the whole enzyme. A beta hairpin in the 'latch' region of the N-terminal domain plays a regulatory role in the enzyme, repressing topoisomerase activity in the absence of ATP and preventing the enzyme from acting as an ATP-independent relaxing enzyme; it also helps to coordinate nucleotide hydrolysis by the ATPase domain with the supercoiling activity of the topoisomerase domain.</text>
</comment>
<comment type="PTM">
    <text evidence="9">This protein undergoes a protein self splicing that involves a post-translational excision of the intervening region (intein) followed by peptide ligation.</text>
</comment>
<comment type="disruption phenotype">
    <text evidence="6 7">Grows up until 90 degrees Celsius; does not grow during 49 hours at 93 degrees Celsius (PubMed:15231817). Temperature sensitive growth at 85 but not 93 degrees Celsius (PubMed:30605516). Loss of ATP-dependent DNA-relaxing activity, no longer positively supercoils negatively supercoiled plasmid DNA in the presence of ATP (PubMed:15231817).</text>
</comment>
<comment type="miscellaneous">
    <text evidence="2 9">This enzyme is the only unique feature of hyperthermophilic bacteria/archaea known and seems to be essential for adaptation to life at high temperatures. It may play a role in stabilization of DNA at high temperatures.</text>
</comment>
<comment type="similarity">
    <text evidence="2">In the N-terminal section; belongs to the DEAD box helicase family. DDVD subfamily.</text>
</comment>
<comment type="similarity">
    <text evidence="2">In the C-terminal section; belongs to the type IA topoisomerase family.</text>
</comment>
<evidence type="ECO:0000255" key="1"/>
<evidence type="ECO:0000255" key="2">
    <source>
        <dbReference type="HAMAP-Rule" id="MF_01125"/>
    </source>
</evidence>
<evidence type="ECO:0000255" key="3">
    <source>
        <dbReference type="PROSITE-ProRule" id="PRU01380"/>
    </source>
</evidence>
<evidence type="ECO:0000255" key="4">
    <source>
        <dbReference type="PROSITE-ProRule" id="PRU01381"/>
    </source>
</evidence>
<evidence type="ECO:0000255" key="5">
    <source>
        <dbReference type="PROSITE-ProRule" id="PRU01383"/>
    </source>
</evidence>
<evidence type="ECO:0000269" key="6">
    <source>
    </source>
</evidence>
<evidence type="ECO:0000269" key="7">
    <source>
    </source>
</evidence>
<evidence type="ECO:0000303" key="8">
    <source>
    </source>
</evidence>
<evidence type="ECO:0000305" key="9">
    <source>
    </source>
</evidence>
<protein>
    <recommendedName>
        <fullName evidence="2 8">Reverse gyrase</fullName>
        <ecNumber evidence="2">5.6.2.-</ecNumber>
    </recommendedName>
    <component>
        <recommendedName>
            <fullName>Pko r-Gyr intein</fullName>
        </recommendedName>
    </component>
</protein>
<reference key="1">
    <citation type="journal article" date="2004" name="J. Bacteriol.">
        <title>Reverse gyrase is not a prerequisite for hyperthermophilic life.</title>
        <authorList>
            <person name="Atomi H."/>
            <person name="Matsumi R."/>
            <person name="Imanaka T."/>
        </authorList>
    </citation>
    <scope>NUCLEOTIDE SEQUENCE [GENOMIC DNA]</scope>
    <scope>PROBABLE INTEIN</scope>
    <scope>DISRUPTION PHENOTYPE</scope>
    <source>
        <strain>ATCC BAA-918 / JCM 12380 / KOD1</strain>
    </source>
</reference>
<reference key="2">
    <citation type="journal article" date="2005" name="Genome Res.">
        <title>Complete genome sequence of the hyperthermophilic archaeon Thermococcus kodakaraensis KOD1 and comparison with Pyrococcus genomes.</title>
        <authorList>
            <person name="Fukui T."/>
            <person name="Atomi H."/>
            <person name="Kanai T."/>
            <person name="Matsumi R."/>
            <person name="Fujiwara S."/>
            <person name="Imanaka T."/>
        </authorList>
    </citation>
    <scope>NUCLEOTIDE SEQUENCE [LARGE SCALE GENOMIC DNA]</scope>
    <source>
        <strain>ATCC BAA-918 / JCM 12380 / KOD1</strain>
    </source>
</reference>
<reference key="3">
    <citation type="journal article" date="2019" name="Nucleic Acids Res.">
        <title>Random mutagenesis of a hyperthermophilic archaeon identified tRNA modifications associated with cellular hyperthermotolerance.</title>
        <authorList>
            <person name="Orita I."/>
            <person name="Futatsuishi R."/>
            <person name="Adachi K."/>
            <person name="Ohira T."/>
            <person name="Kaneko A."/>
            <person name="Minowa K."/>
            <person name="Suzuki M."/>
            <person name="Tamura T."/>
            <person name="Nakamura S."/>
            <person name="Imanaka T."/>
            <person name="Suzuki T."/>
            <person name="Fukui T."/>
        </authorList>
    </citation>
    <scope>DISRUPTION PHENOTYPE</scope>
    <source>
        <strain>ATCC BAA-918 / JCM 12380 / KOD1</strain>
    </source>
</reference>
<name>RGYR_THEKO</name>
<sequence>MKAVYREMCPNCWGRISDERLVMRNPCEECLDEPVHADSYFQLVSAVRNALKLRGTLKEWEKIYQLENQTREIEEFFKKATGFTFWSAQRTWVKRLLKGRSFSIIAPTGMGKSTFGAFMAVWHALKGKKSYIVVPTTPLVIQTVRKIEGIMENANADVRLAYYHGNLRKKEKEEMLERIKNEDYDILVTSAQWLARNYEEVLKGRHFDFIFVDDVDAFLKASKNIDRSLYLLGFTDEIIQKAWEIIRLKKQMSRYLNGNSEDRNEKLNGLNREIEKLQREIEKFKRKNKIGIMIIASATGSARGDRIKLYRELLGFEVGSGRSALRNVVDSYLKPTKDIKEHVEELLTRLGKGGLIFVPVDQGLGYAEELANYLSEKGFKIELVSSKNKKALEKFENGEADYLIGSATYYGSLVRGIDLPHLIRYAVFTGVPKFRFSIDLERPTIYRALGLLSEIMDFLSEEDRRQAEKLHARLRRLIRNIPQFELLKIEEALAEGLPIENEFHNHVLGVFRELVEFLRRVLRDEEVLRKLAEDPFISLVKEEGKWYIEIPDVRTYIQATGRTSRLFAGGITKGLSVLIVDNEKVFNGLVRQMRWRFQEFKMVPFEELDLDEILRQIDEDREKVRLVMEGKISAKVKDLVRSALMIVESPNKARTIANFFGQPSKTRIGDLVAYEISVGDRMLTILASGGHMFDLVTNEGYHGVLIQNEGDMLKFIPVYDTLKRCRDCGHQFVDWEKKGVCPRCGSTNVRDALENVIAMREIAQEVDEILIATDPDTEGEKIAWDIRNVLAPYTPNIKRIEFHEVTRPAIMKAIQEARDVNENRVNAQIVRRIEDRWIGFELSQELQRVFESYNLSAGRVQTPVLGWIIERYKEFTESEVYFLGLTLENGLQVTIELGKDGKDVEPPEYVTVEEVQLEERELNPAPPYTTDAMLKDASTFLKLSAPETMRLAQDLFEAGLCVTPDTLVSLADGRIMEIKDAVEKSEGNLLSVNGLKPKEAKALKFWEIDWNGPLKVIKLKNGHEIKATPDHGLLVMREGKLGWVSAKNVREGDYVAFAYNTGHRGRDEYTLLKLMIKLGITDVMVELDEEYFNEKVAPIVRERISTSTKYKYLRRRVLPLYLLQEWGLDDYEAHVKSLYRQRAGSKPIPNFKLDGRFWYVFGLVLGDGTLRDSKVLISQTPLKDVKSVLEDVFPFLRVFETTNQVGFSNSIIAEVFRRLGARKGKLHPLVFGLREEYINAMIAGYFDTDGTFSILNDRKGPNFRGILTSKRGDVLRMLSVYLYQIGIMNYLRRDERTGVWDLIISNRSLEKFREKIYPYLRIRRAQFDEAYSVYRASRRAFEGDLLPVAPVFGKLKFKNGTKNRILKETGIDVWNWLKRPEGEIPRDKLSKVLEYAEESPEKEFLKSLVEAGVTWVKVKGVEEELYTGKLYDFTTTTENFLSNGAVSHNCTYHRTDSTHVSNTGIEVAKEYITQELGEKYFKPRPWGEEGAHEAIRPTRPIDTGRLMQLIRDGIIQLPRNLTRNHYRLYDMIFRRFMTSQMTPAKILYEKAVINAGVGKAELEGYVEIIEDGWTRLRSPPLRELPKLEKGMKLKVVEAKKWKAPKVSLYTQGDIIALMKERKIGRPSTYAKIVETLMRRGYVVETKGRKKLLPTEKGIKVYHYLVSKYRDLVSEERTRELEEIMDRIEEGIEDYIKVLGELYSEIQRYVSG</sequence>
<organism>
    <name type="scientific">Thermococcus kodakarensis (strain ATCC BAA-918 / JCM 12380 / KOD1)</name>
    <name type="common">Pyrococcus kodakaraensis (strain KOD1)</name>
    <dbReference type="NCBI Taxonomy" id="69014"/>
    <lineage>
        <taxon>Archaea</taxon>
        <taxon>Methanobacteriati</taxon>
        <taxon>Methanobacteriota</taxon>
        <taxon>Thermococci</taxon>
        <taxon>Thermococcales</taxon>
        <taxon>Thermococcaceae</taxon>
        <taxon>Thermococcus</taxon>
    </lineage>
</organism>
<gene>
    <name evidence="2 8" type="primary">rgy</name>
    <name type="ordered locus">TK0470</name>
</gene>
<feature type="chain" id="PRO_0000459349" description="Reverse gyrase">
    <location>
        <begin position="1"/>
        <end position="1711"/>
    </location>
</feature>
<feature type="chain" id="PRO_0000030359" description="Reverse gyrase, 1st part" evidence="1">
    <location>
        <begin position="1"/>
        <end position="960"/>
    </location>
</feature>
<feature type="chain" id="PRO_0000030360" description="Pko r-Gyr intein" evidence="1 9">
    <location>
        <begin position="961"/>
        <end position="1449"/>
    </location>
</feature>
<feature type="chain" id="PRO_0000041880" description="Reverse gyrase, 2nd part" evidence="1">
    <location>
        <begin position="1450"/>
        <end position="1711"/>
    </location>
</feature>
<feature type="domain" description="Helicase ATP-binding" evidence="2">
    <location>
        <begin position="93"/>
        <end position="256"/>
    </location>
</feature>
<feature type="domain" description="Toprim" evidence="2">
    <location>
        <begin position="642"/>
        <end position="805"/>
    </location>
</feature>
<feature type="domain" description="Topo IA-type catalytic" evidence="5">
    <location>
        <begin position="821"/>
        <end position="1709"/>
    </location>
</feature>
<feature type="domain" description="DOD-type homing endonuclease">
    <location>
        <begin position="1160"/>
        <end position="1287"/>
    </location>
</feature>
<feature type="zinc finger region" description="RG N-terminal-type" evidence="3">
    <location>
        <begin position="1"/>
        <end position="39"/>
    </location>
</feature>
<feature type="zinc finger region" description="RG C-terminal-type" evidence="4">
    <location>
        <begin position="722"/>
        <end position="751"/>
    </location>
</feature>
<feature type="region of interest" description="Topoisomerase I" evidence="2">
    <location>
        <begin position="638"/>
        <end position="1711"/>
    </location>
</feature>
<feature type="short sequence motif" description="DEAD box" evidence="2">
    <location>
        <begin position="213"/>
        <end position="216"/>
    </location>
</feature>
<feature type="active site" description="O-(5'-phospho-DNA)-tyrosine intermediate" evidence="5">
    <location>
        <position position="1452"/>
    </location>
</feature>
<feature type="binding site" evidence="2">
    <location>
        <position position="9"/>
    </location>
    <ligand>
        <name>Zn(2+)</name>
        <dbReference type="ChEBI" id="CHEBI:29105"/>
        <label>1</label>
    </ligand>
</feature>
<feature type="binding site" evidence="2">
    <location>
        <position position="12"/>
    </location>
    <ligand>
        <name>Zn(2+)</name>
        <dbReference type="ChEBI" id="CHEBI:29105"/>
        <label>1</label>
    </ligand>
</feature>
<feature type="binding site" evidence="2">
    <location>
        <position position="27"/>
    </location>
    <ligand>
        <name>Zn(2+)</name>
        <dbReference type="ChEBI" id="CHEBI:29105"/>
        <label>1</label>
    </ligand>
</feature>
<feature type="binding site" evidence="2">
    <location>
        <position position="30"/>
    </location>
    <ligand>
        <name>Zn(2+)</name>
        <dbReference type="ChEBI" id="CHEBI:29105"/>
        <label>1</label>
    </ligand>
</feature>
<feature type="binding site" evidence="2">
    <location>
        <position position="89"/>
    </location>
    <ligand>
        <name>ATP</name>
        <dbReference type="ChEBI" id="CHEBI:30616"/>
    </ligand>
</feature>
<feature type="binding site" evidence="2">
    <location>
        <begin position="106"/>
        <end position="113"/>
    </location>
    <ligand>
        <name>ATP</name>
        <dbReference type="ChEBI" id="CHEBI:30616"/>
    </ligand>
</feature>
<feature type="binding site" evidence="2">
    <location>
        <position position="648"/>
    </location>
    <ligand>
        <name>Mg(2+)</name>
        <dbReference type="ChEBI" id="CHEBI:18420"/>
        <note>catalytic</note>
    </ligand>
</feature>
<feature type="binding site" evidence="2">
    <location>
        <position position="725"/>
    </location>
    <ligand>
        <name>Zn(2+)</name>
        <dbReference type="ChEBI" id="CHEBI:29105"/>
        <label>2</label>
    </ligand>
</feature>
<feature type="binding site" evidence="2">
    <location>
        <position position="728"/>
    </location>
    <ligand>
        <name>Zn(2+)</name>
        <dbReference type="ChEBI" id="CHEBI:29105"/>
        <label>2</label>
    </ligand>
</feature>
<feature type="binding site" evidence="2">
    <location>
        <position position="741"/>
    </location>
    <ligand>
        <name>Zn(2+)</name>
        <dbReference type="ChEBI" id="CHEBI:29105"/>
        <label>2</label>
    </ligand>
</feature>
<feature type="binding site" evidence="2">
    <location>
        <position position="744"/>
    </location>
    <ligand>
        <name>Zn(2+)</name>
        <dbReference type="ChEBI" id="CHEBI:29105"/>
        <label>2</label>
    </ligand>
</feature>
<feature type="binding site" evidence="2">
    <location>
        <position position="774"/>
    </location>
    <ligand>
        <name>Mg(2+)</name>
        <dbReference type="ChEBI" id="CHEBI:18420"/>
        <note>catalytic</note>
    </ligand>
</feature>
<dbReference type="EC" id="5.6.2.-" evidence="2"/>
<dbReference type="EMBL" id="AB117612">
    <property type="protein sequence ID" value="BAD26706.1"/>
    <property type="molecule type" value="Genomic_DNA"/>
</dbReference>
<dbReference type="EMBL" id="AP006878">
    <property type="protein sequence ID" value="BAD84659.1"/>
    <property type="molecule type" value="Genomic_DNA"/>
</dbReference>
<dbReference type="RefSeq" id="WP_011249425.1">
    <property type="nucleotide sequence ID" value="NC_006624.1"/>
</dbReference>
<dbReference type="SMR" id="Q6F598"/>
<dbReference type="STRING" id="69014.TK0470"/>
<dbReference type="EnsemblBacteria" id="BAD84659">
    <property type="protein sequence ID" value="BAD84659"/>
    <property type="gene ID" value="TK0470"/>
</dbReference>
<dbReference type="GeneID" id="78446981"/>
<dbReference type="KEGG" id="tko:TK0470"/>
<dbReference type="PATRIC" id="fig|69014.16.peg.462"/>
<dbReference type="eggNOG" id="arCOG01526">
    <property type="taxonomic scope" value="Archaea"/>
</dbReference>
<dbReference type="eggNOG" id="arCOG03151">
    <property type="taxonomic scope" value="Archaea"/>
</dbReference>
<dbReference type="HOGENOM" id="CLU_002886_0_0_2"/>
<dbReference type="InParanoid" id="Q6F598"/>
<dbReference type="OrthoDB" id="30963at2157"/>
<dbReference type="PhylomeDB" id="Q6F598"/>
<dbReference type="Proteomes" id="UP000000536">
    <property type="component" value="Chromosome"/>
</dbReference>
<dbReference type="GO" id="GO:0005737">
    <property type="term" value="C:cytoplasm"/>
    <property type="evidence" value="ECO:0007669"/>
    <property type="project" value="UniProtKB-SubCell"/>
</dbReference>
<dbReference type="GO" id="GO:0005524">
    <property type="term" value="F:ATP binding"/>
    <property type="evidence" value="ECO:0007669"/>
    <property type="project" value="UniProtKB-UniRule"/>
</dbReference>
<dbReference type="GO" id="GO:0016887">
    <property type="term" value="F:ATP hydrolysis activity"/>
    <property type="evidence" value="ECO:0007669"/>
    <property type="project" value="RHEA"/>
</dbReference>
<dbReference type="GO" id="GO:0003677">
    <property type="term" value="F:DNA binding"/>
    <property type="evidence" value="ECO:0007669"/>
    <property type="project" value="UniProtKB-UniRule"/>
</dbReference>
<dbReference type="GO" id="GO:0003918">
    <property type="term" value="F:DNA topoisomerase type II (double strand cut, ATP-hydrolyzing) activity"/>
    <property type="evidence" value="ECO:0007669"/>
    <property type="project" value="UniProtKB-EC"/>
</dbReference>
<dbReference type="GO" id="GO:0004519">
    <property type="term" value="F:endonuclease activity"/>
    <property type="evidence" value="ECO:0007669"/>
    <property type="project" value="InterPro"/>
</dbReference>
<dbReference type="GO" id="GO:0160097">
    <property type="term" value="F:reverse gyrase activity"/>
    <property type="evidence" value="ECO:0007669"/>
    <property type="project" value="UniProtKB-UniRule"/>
</dbReference>
<dbReference type="GO" id="GO:0008270">
    <property type="term" value="F:zinc ion binding"/>
    <property type="evidence" value="ECO:0007669"/>
    <property type="project" value="UniProtKB-UniRule"/>
</dbReference>
<dbReference type="GO" id="GO:0006265">
    <property type="term" value="P:DNA topological change"/>
    <property type="evidence" value="ECO:0007669"/>
    <property type="project" value="UniProtKB-UniRule"/>
</dbReference>
<dbReference type="GO" id="GO:0016539">
    <property type="term" value="P:intein-mediated protein splicing"/>
    <property type="evidence" value="ECO:0007669"/>
    <property type="project" value="InterPro"/>
</dbReference>
<dbReference type="CDD" id="cd17924">
    <property type="entry name" value="DDXDc_reverse_gyrase"/>
    <property type="match status" value="1"/>
</dbReference>
<dbReference type="CDD" id="cd00081">
    <property type="entry name" value="Hint"/>
    <property type="match status" value="2"/>
</dbReference>
<dbReference type="CDD" id="cd18798">
    <property type="entry name" value="SF2_C_reverse_gyrase"/>
    <property type="match status" value="1"/>
</dbReference>
<dbReference type="CDD" id="cd00186">
    <property type="entry name" value="TOP1Ac"/>
    <property type="match status" value="1"/>
</dbReference>
<dbReference type="CDD" id="cd03361">
    <property type="entry name" value="TOPRIM_TopoIA_RevGyr"/>
    <property type="match status" value="1"/>
</dbReference>
<dbReference type="Gene3D" id="3.40.50.140">
    <property type="match status" value="1"/>
</dbReference>
<dbReference type="Gene3D" id="2.170.16.10">
    <property type="entry name" value="Hedgehog/Intein (Hint) domain"/>
    <property type="match status" value="1"/>
</dbReference>
<dbReference type="Gene3D" id="3.10.28.10">
    <property type="entry name" value="Homing endonucleases"/>
    <property type="match status" value="1"/>
</dbReference>
<dbReference type="Gene3D" id="3.40.50.300">
    <property type="entry name" value="P-loop containing nucleotide triphosphate hydrolases"/>
    <property type="match status" value="3"/>
</dbReference>
<dbReference type="Gene3D" id="1.10.460.10">
    <property type="entry name" value="Topoisomerase I, domain 2"/>
    <property type="match status" value="2"/>
</dbReference>
<dbReference type="Gene3D" id="2.70.20.10">
    <property type="entry name" value="Topoisomerase I, domain 3"/>
    <property type="match status" value="2"/>
</dbReference>
<dbReference type="Gene3D" id="1.10.290.10">
    <property type="entry name" value="Topoisomerase I, domain 4"/>
    <property type="match status" value="2"/>
</dbReference>
<dbReference type="HAMAP" id="MF_01125">
    <property type="entry name" value="Reverse_gyrase"/>
    <property type="match status" value="1"/>
</dbReference>
<dbReference type="InterPro" id="IPR011545">
    <property type="entry name" value="DEAD/DEAH_box_helicase_dom"/>
</dbReference>
<dbReference type="InterPro" id="IPR014001">
    <property type="entry name" value="Helicase_ATP-bd"/>
</dbReference>
<dbReference type="InterPro" id="IPR003586">
    <property type="entry name" value="Hint_dom_C"/>
</dbReference>
<dbReference type="InterPro" id="IPR003587">
    <property type="entry name" value="Hint_dom_N"/>
</dbReference>
<dbReference type="InterPro" id="IPR036844">
    <property type="entry name" value="Hint_dom_sf"/>
</dbReference>
<dbReference type="InterPro" id="IPR027434">
    <property type="entry name" value="Homing_endonucl"/>
</dbReference>
<dbReference type="InterPro" id="IPR030934">
    <property type="entry name" value="Intein_C"/>
</dbReference>
<dbReference type="InterPro" id="IPR004042">
    <property type="entry name" value="Intein_endonuc_central"/>
</dbReference>
<dbReference type="InterPro" id="IPR006141">
    <property type="entry name" value="Intein_N"/>
</dbReference>
<dbReference type="InterPro" id="IPR004860">
    <property type="entry name" value="LAGLIDADG_dom"/>
</dbReference>
<dbReference type="InterPro" id="IPR027417">
    <property type="entry name" value="P-loop_NTPase"/>
</dbReference>
<dbReference type="InterPro" id="IPR005736">
    <property type="entry name" value="Reverse_gyrase"/>
</dbReference>
<dbReference type="InterPro" id="IPR003601">
    <property type="entry name" value="Topo_IA_2"/>
</dbReference>
<dbReference type="InterPro" id="IPR013497">
    <property type="entry name" value="Topo_IA_cen"/>
</dbReference>
<dbReference type="InterPro" id="IPR013824">
    <property type="entry name" value="Topo_IA_cen_sub1"/>
</dbReference>
<dbReference type="InterPro" id="IPR013825">
    <property type="entry name" value="Topo_IA_cen_sub2"/>
</dbReference>
<dbReference type="InterPro" id="IPR013826">
    <property type="entry name" value="Topo_IA_cen_sub3"/>
</dbReference>
<dbReference type="InterPro" id="IPR023405">
    <property type="entry name" value="Topo_IA_core_domain"/>
</dbReference>
<dbReference type="InterPro" id="IPR003602">
    <property type="entry name" value="Topo_IA_DNA-bd_dom"/>
</dbReference>
<dbReference type="InterPro" id="IPR006171">
    <property type="entry name" value="TOPRIM_dom"/>
</dbReference>
<dbReference type="InterPro" id="IPR034142">
    <property type="entry name" value="TOPRIM_RevGyr"/>
</dbReference>
<dbReference type="InterPro" id="IPR040569">
    <property type="entry name" value="Znf_Rg"/>
</dbReference>
<dbReference type="NCBIfam" id="TIGR01443">
    <property type="entry name" value="intein_Cterm"/>
    <property type="match status" value="1"/>
</dbReference>
<dbReference type="NCBIfam" id="TIGR01445">
    <property type="entry name" value="intein_Nterm"/>
    <property type="match status" value="1"/>
</dbReference>
<dbReference type="NCBIfam" id="TIGR01054">
    <property type="entry name" value="rgy"/>
    <property type="match status" value="1"/>
</dbReference>
<dbReference type="PANTHER" id="PTHR43505">
    <property type="entry name" value="REVERSE GYRASE"/>
    <property type="match status" value="1"/>
</dbReference>
<dbReference type="PANTHER" id="PTHR43505:SF1">
    <property type="entry name" value="REVERSE GYRASE"/>
    <property type="match status" value="1"/>
</dbReference>
<dbReference type="Pfam" id="PF00270">
    <property type="entry name" value="DEAD"/>
    <property type="match status" value="1"/>
</dbReference>
<dbReference type="Pfam" id="PF14890">
    <property type="entry name" value="Intein_splicing"/>
    <property type="match status" value="1"/>
</dbReference>
<dbReference type="Pfam" id="PF14528">
    <property type="entry name" value="LAGLIDADG_3"/>
    <property type="match status" value="1"/>
</dbReference>
<dbReference type="Pfam" id="PF01131">
    <property type="entry name" value="Topoisom_bac"/>
    <property type="match status" value="2"/>
</dbReference>
<dbReference type="Pfam" id="PF01751">
    <property type="entry name" value="Toprim"/>
    <property type="match status" value="1"/>
</dbReference>
<dbReference type="Pfam" id="PF17915">
    <property type="entry name" value="zf_Rg"/>
    <property type="match status" value="1"/>
</dbReference>
<dbReference type="PRINTS" id="PR00417">
    <property type="entry name" value="PRTPISMRASEI"/>
</dbReference>
<dbReference type="SMART" id="SM00487">
    <property type="entry name" value="DEXDc"/>
    <property type="match status" value="1"/>
</dbReference>
<dbReference type="SMART" id="SM00305">
    <property type="entry name" value="HintC"/>
    <property type="match status" value="1"/>
</dbReference>
<dbReference type="SMART" id="SM00306">
    <property type="entry name" value="HintN"/>
    <property type="match status" value="1"/>
</dbReference>
<dbReference type="SMART" id="SM00437">
    <property type="entry name" value="TOP1Ac"/>
    <property type="match status" value="1"/>
</dbReference>
<dbReference type="SMART" id="SM00436">
    <property type="entry name" value="TOP1Bc"/>
    <property type="match status" value="1"/>
</dbReference>
<dbReference type="SMART" id="SM00493">
    <property type="entry name" value="TOPRIM"/>
    <property type="match status" value="1"/>
</dbReference>
<dbReference type="SUPFAM" id="SSF51294">
    <property type="entry name" value="Hedgehog/intein (Hint) domain"/>
    <property type="match status" value="1"/>
</dbReference>
<dbReference type="SUPFAM" id="SSF55608">
    <property type="entry name" value="Homing endonucleases"/>
    <property type="match status" value="1"/>
</dbReference>
<dbReference type="SUPFAM" id="SSF52540">
    <property type="entry name" value="P-loop containing nucleoside triphosphate hydrolases"/>
    <property type="match status" value="2"/>
</dbReference>
<dbReference type="SUPFAM" id="SSF56712">
    <property type="entry name" value="Prokaryotic type I DNA topoisomerase"/>
    <property type="match status" value="2"/>
</dbReference>
<dbReference type="PROSITE" id="PS51192">
    <property type="entry name" value="HELICASE_ATP_BIND_1"/>
    <property type="match status" value="1"/>
</dbReference>
<dbReference type="PROSITE" id="PS50818">
    <property type="entry name" value="INTEIN_C_TER"/>
    <property type="match status" value="1"/>
</dbReference>
<dbReference type="PROSITE" id="PS50819">
    <property type="entry name" value="INTEIN_ENDONUCLEASE"/>
    <property type="match status" value="1"/>
</dbReference>
<dbReference type="PROSITE" id="PS50817">
    <property type="entry name" value="INTEIN_N_TER"/>
    <property type="match status" value="1"/>
</dbReference>
<dbReference type="PROSITE" id="PS52039">
    <property type="entry name" value="TOPO_IA_2"/>
    <property type="match status" value="1"/>
</dbReference>
<dbReference type="PROSITE" id="PS50880">
    <property type="entry name" value="TOPRIM"/>
    <property type="match status" value="1"/>
</dbReference>
<dbReference type="PROSITE" id="PS52037">
    <property type="entry name" value="ZF_RG_C"/>
    <property type="match status" value="1"/>
</dbReference>
<dbReference type="PROSITE" id="PS52036">
    <property type="entry name" value="ZF_RG_N"/>
    <property type="match status" value="1"/>
</dbReference>
<accession>Q6F598</accession>